<dbReference type="EMBL" id="X54459">
    <property type="protein sequence ID" value="CAA38334.1"/>
    <property type="molecule type" value="Genomic_DNA"/>
</dbReference>
<dbReference type="PIR" id="S22999">
    <property type="entry name" value="S22999"/>
</dbReference>
<dbReference type="RefSeq" id="WP_011205817.1">
    <property type="nucleotide sequence ID" value="NZ_VMTS01000048.1"/>
</dbReference>
<dbReference type="SMR" id="Q00185"/>
<dbReference type="GO" id="GO:0005886">
    <property type="term" value="C:plasma membrane"/>
    <property type="evidence" value="ECO:0007669"/>
    <property type="project" value="UniProtKB-SubCell"/>
</dbReference>
<dbReference type="GO" id="GO:0003677">
    <property type="term" value="F:DNA binding"/>
    <property type="evidence" value="ECO:0007669"/>
    <property type="project" value="UniProtKB-KW"/>
</dbReference>
<dbReference type="CDD" id="cd01127">
    <property type="entry name" value="TrwB_TraG_TraD_VirD4"/>
    <property type="match status" value="2"/>
</dbReference>
<dbReference type="Gene3D" id="3.40.50.300">
    <property type="entry name" value="P-loop containing nucleotide triphosphate hydrolases"/>
    <property type="match status" value="1"/>
</dbReference>
<dbReference type="InterPro" id="IPR027417">
    <property type="entry name" value="P-loop_NTPase"/>
</dbReference>
<dbReference type="InterPro" id="IPR051539">
    <property type="entry name" value="T4SS-coupling_protein"/>
</dbReference>
<dbReference type="InterPro" id="IPR003688">
    <property type="entry name" value="TraG/VirD4"/>
</dbReference>
<dbReference type="NCBIfam" id="NF010453">
    <property type="entry name" value="PRK13880.1"/>
    <property type="match status" value="1"/>
</dbReference>
<dbReference type="PANTHER" id="PTHR37937">
    <property type="entry name" value="CONJUGATIVE TRANSFER: DNA TRANSPORT"/>
    <property type="match status" value="1"/>
</dbReference>
<dbReference type="PANTHER" id="PTHR37937:SF1">
    <property type="entry name" value="CONJUGATIVE TRANSFER: DNA TRANSPORT"/>
    <property type="match status" value="1"/>
</dbReference>
<dbReference type="Pfam" id="PF02534">
    <property type="entry name" value="T4SS-DNA_transf"/>
    <property type="match status" value="1"/>
</dbReference>
<dbReference type="SUPFAM" id="SSF52540">
    <property type="entry name" value="P-loop containing nucleoside triphosphate hydrolases"/>
    <property type="match status" value="1"/>
</dbReference>
<sequence length="635" mass="69858">MKNRNNAVGPQIRAKKPKASKTVPILAGLSLGAGLQTATQYFAHSFQYQAGLGWNINHVYTPWSILQWAGKWYGQYPDDFMRAASMGMVVSTVGLLGTAVTQMVKANTGKANDYLHGSARWADKKDIQAAGLLPRPRTVVELVSGKHPPTSSGVYVGGWQDKDGKFHYLRHNGPEHVLTYAPTRSGKGVGLVVPTLLSWAHSAVITDLKGELWALTAGWRKKHARNKVVRFEPASAQGSACWNPLDEIRLGTEYEVGDVQNLATLIVDPDGKGLESHWQKTSQALLVGVILHALYKAKNEGTPATLPSVDGMLADPNRDVGELWMEMTTYGHVDGQNHPAVGSAARDMMDRPEEESGSVLSTAKSYLALYRDPVVARNVSKSDFRIKQLMHHDDPVSLFIVTQPNDKARLRPLVRVMVNMIVRLLADKMDFENGRPVAHYKHRLLMMLDEFPSLGKLEILQESLAFVAGYGIKCYLICQDINQLKSRETGYGHDESITSNCHVQNAYPPNRVETAEHLSKLTGTTTIVKEQITTSGRRTSALLGNVSRTFQEVQRPLLTPDECLRMPGPKKSADGSIEEAGDMVVYVAGYPAIYGKQPLYFKDPIFQARAAVPAPKVSDKLIQTATVEEGEGITI</sequence>
<protein>
    <recommendedName>
        <fullName>Conjugal transfer protein TraG</fullName>
    </recommendedName>
</protein>
<proteinExistence type="evidence at protein level"/>
<accession>Q00185</accession>
<geneLocation type="plasmid">
    <name>IncP-alpha RP4</name>
</geneLocation>
<feature type="chain" id="PRO_0000221657" description="Conjugal transfer protein TraG">
    <location>
        <begin position="1"/>
        <end position="635"/>
    </location>
</feature>
<feature type="topological domain" description="Cytoplasmic" evidence="1">
    <location>
        <begin position="1"/>
        <end position="22"/>
    </location>
</feature>
<feature type="transmembrane region" description="Helical" evidence="1">
    <location>
        <begin position="23"/>
        <end position="39"/>
    </location>
</feature>
<feature type="topological domain" description="Periplasmic" evidence="1">
    <location>
        <begin position="40"/>
        <end position="82"/>
    </location>
</feature>
<feature type="transmembrane region" description="Helical" evidence="1">
    <location>
        <begin position="83"/>
        <end position="100"/>
    </location>
</feature>
<feature type="topological domain" description="Cytoplasmic" evidence="1">
    <location>
        <begin position="101"/>
        <end position="635"/>
    </location>
</feature>
<feature type="mutagenesis site" description="Loss of transfer activity." evidence="2">
    <original>K</original>
    <variation>T</variation>
    <location>
        <position position="187"/>
    </location>
</feature>
<feature type="mutagenesis site" description="Decrease in transfer activity." evidence="2">
    <original>K</original>
    <variation>T</variation>
    <location>
        <position position="209"/>
    </location>
</feature>
<feature type="mutagenesis site" description="Decrease in transfer activity." evidence="2">
    <original>E</original>
    <variation>Q</variation>
    <location>
        <position position="211"/>
    </location>
</feature>
<feature type="mutagenesis site" description="Loss of transfer activity." evidence="2">
    <original>D</original>
    <variation>N</variation>
    <location>
        <position position="449"/>
    </location>
</feature>
<feature type="mutagenesis site" description="No change in transfer activity." evidence="2">
    <original>K</original>
    <variation>T</variation>
    <location>
        <position position="456"/>
    </location>
</feature>
<organism>
    <name type="scientific">Escherichia coli</name>
    <dbReference type="NCBI Taxonomy" id="562"/>
    <lineage>
        <taxon>Bacteria</taxon>
        <taxon>Pseudomonadati</taxon>
        <taxon>Pseudomonadota</taxon>
        <taxon>Gammaproteobacteria</taxon>
        <taxon>Enterobacterales</taxon>
        <taxon>Enterobacteriaceae</taxon>
        <taxon>Escherichia</taxon>
    </lineage>
</organism>
<evidence type="ECO:0000255" key="1"/>
<evidence type="ECO:0000269" key="2">
    <source>
    </source>
</evidence>
<evidence type="ECO:0000305" key="3"/>
<keyword id="KW-0997">Cell inner membrane</keyword>
<keyword id="KW-1003">Cell membrane</keyword>
<keyword id="KW-0184">Conjugation</keyword>
<keyword id="KW-0903">Direct protein sequencing</keyword>
<keyword id="KW-0238">DNA-binding</keyword>
<keyword id="KW-0472">Membrane</keyword>
<keyword id="KW-0614">Plasmid</keyword>
<keyword id="KW-0812">Transmembrane</keyword>
<keyword id="KW-1133">Transmembrane helix</keyword>
<name>TRAG4_ECOLX</name>
<gene>
    <name type="primary">traG</name>
</gene>
<reference key="1">
    <citation type="journal article" date="1991" name="DNA Seq.">
        <title>Nucleotide sequence and organization of genes flanking the transfer origin of promiscuous plasmid RP4.</title>
        <authorList>
            <person name="Ziegelin G."/>
            <person name="Pansegrau W."/>
            <person name="Strack B."/>
            <person name="Balzer D."/>
            <person name="Kroeger M."/>
            <person name="Kruft V."/>
            <person name="Lanka E."/>
        </authorList>
    </citation>
    <scope>NUCLEOTIDE SEQUENCE [GENOMIC DNA]</scope>
    <scope>PROTEIN SEQUENCE OF 1-8</scope>
    <source>
        <strain>ATCC 33694 / HB101</strain>
    </source>
</reference>
<reference key="2">
    <citation type="journal article" date="1994" name="J. Bacteriol.">
        <title>Essential motifs of relaxase (TraI) and TraG proteins involved in conjugative transfer of plasmid RP4.</title>
        <authorList>
            <person name="Balzer D."/>
            <person name="Pansegrau W."/>
            <person name="Lanka E."/>
        </authorList>
    </citation>
    <scope>MUTAGENESIS OF LYS-187; LYS-209; GLU-211; ASP-449 AND LYS-456</scope>
</reference>
<reference key="3">
    <citation type="journal article" date="2002" name="J. Bacteriol.">
        <title>TraG-like proteins of DNA transfer systems and of the Helicobacter pylori type IV secretion system: inner membrane gate for exported substrates?</title>
        <authorList>
            <person name="Schroeder G."/>
            <person name="Krause S."/>
            <person name="Zechner E.L."/>
            <person name="Traxler B."/>
            <person name="Yeo H.-J."/>
            <person name="Lurz R."/>
            <person name="Waksman G."/>
            <person name="Lanka E."/>
        </authorList>
    </citation>
    <scope>CHARACTERIZATION</scope>
    <scope>TOPOLOGY</scope>
</reference>
<comment type="function">
    <text>Required for conjugative transfer of plasmid RP4. Binds tightly and specifically to the relaxase TraI. Can also bind to DNA without sequence specificity. May form a pore-like structure that could serve as a channel for DNA transfer.</text>
</comment>
<comment type="subunit">
    <text>May form multimers of at least 18 subunits.</text>
</comment>
<comment type="subcellular location">
    <subcellularLocation>
        <location>Cell inner membrane</location>
        <topology>Multi-pass membrane protein</topology>
    </subcellularLocation>
</comment>
<comment type="similarity">
    <text evidence="3">Belongs to the VirD4/TraG family.</text>
</comment>